<reference key="1">
    <citation type="journal article" date="2007" name="PLoS Genet.">
        <title>Genome analysis of Minibacterium massiliensis highlights the convergent evolution of water-living bacteria.</title>
        <authorList>
            <person name="Audic S."/>
            <person name="Robert C."/>
            <person name="Campagna B."/>
            <person name="Parinello H."/>
            <person name="Claverie J.-M."/>
            <person name="Raoult D."/>
            <person name="Drancourt M."/>
        </authorList>
    </citation>
    <scope>NUCLEOTIDE SEQUENCE [LARGE SCALE GENOMIC DNA]</scope>
    <source>
        <strain>Marseille</strain>
    </source>
</reference>
<proteinExistence type="inferred from homology"/>
<comment type="catalytic activity">
    <reaction evidence="1">
        <text>L-cysteine + L-glutamate + ATP = gamma-L-glutamyl-L-cysteine + ADP + phosphate + H(+)</text>
        <dbReference type="Rhea" id="RHEA:13285"/>
        <dbReference type="ChEBI" id="CHEBI:15378"/>
        <dbReference type="ChEBI" id="CHEBI:29985"/>
        <dbReference type="ChEBI" id="CHEBI:30616"/>
        <dbReference type="ChEBI" id="CHEBI:35235"/>
        <dbReference type="ChEBI" id="CHEBI:43474"/>
        <dbReference type="ChEBI" id="CHEBI:58173"/>
        <dbReference type="ChEBI" id="CHEBI:456216"/>
        <dbReference type="EC" id="6.3.2.2"/>
    </reaction>
</comment>
<comment type="pathway">
    <text evidence="1">Sulfur metabolism; glutathione biosynthesis; glutathione from L-cysteine and L-glutamate: step 1/2.</text>
</comment>
<comment type="similarity">
    <text evidence="1">Belongs to the glutamate--cysteine ligase type 1 family. Type 1 subfamily.</text>
</comment>
<gene>
    <name evidence="1" type="primary">gshA</name>
    <name type="ordered locus">mma_1166</name>
</gene>
<sequence>MSNLFTRRLALLADDAHRDLLNQGRRGIERETLRVDLQGKLALGPHPVALGSALTNPQITTDYSESLLEFITPAEHDVATALEELDRIHRFANAKLDHELLWSQSMPCTLPEEADIPIAWYGTSHIGMIKHVYRRGLALRYGKAMQCIAGLHYNYSLSEDLWRVIKQSEQSRLDDKSYQSESYISLIRNFQRYSWLLMYLFGASPALSTHFLRGREHELQTLSDDTLYLPYATSLRMSDLGYQNNAQAGLMPPYNDLESYMRSLSRAVRQAYPAYEAIGTRRNGEWIQLNTNLLQIENEYYATIRPKRVINSGERPVEALCARGVQYIEVRCMDIDPFEPLGISLPTSRFLDAFLLFCALDDSPLTDEANNRERTENFARTVKEGRRPGLLLQRDGAAVKLQDWGLELLERIQATADLLDAQRADSQHAQALAAQKEKLLDAGLTPSARVLAELQATDKSFEQFGLRQSIAHAEYFRARPLNAEENFYFETLAKTSIAEQEEMERTQSGDFDAFVEAYNQRTPQQLCD</sequence>
<accession>A6SX59</accession>
<evidence type="ECO:0000255" key="1">
    <source>
        <dbReference type="HAMAP-Rule" id="MF_00578"/>
    </source>
</evidence>
<protein>
    <recommendedName>
        <fullName evidence="1">Glutamate--cysteine ligase</fullName>
        <ecNumber evidence="1">6.3.2.2</ecNumber>
    </recommendedName>
    <alternativeName>
        <fullName evidence="1">Gamma-ECS</fullName>
        <shortName evidence="1">GCS</shortName>
    </alternativeName>
    <alternativeName>
        <fullName evidence="1">Gamma-glutamylcysteine synthetase</fullName>
    </alternativeName>
</protein>
<organism>
    <name type="scientific">Janthinobacterium sp. (strain Marseille)</name>
    <name type="common">Minibacterium massiliensis</name>
    <dbReference type="NCBI Taxonomy" id="375286"/>
    <lineage>
        <taxon>Bacteria</taxon>
        <taxon>Pseudomonadati</taxon>
        <taxon>Pseudomonadota</taxon>
        <taxon>Betaproteobacteria</taxon>
        <taxon>Burkholderiales</taxon>
        <taxon>Oxalobacteraceae</taxon>
        <taxon>Janthinobacterium</taxon>
    </lineage>
</organism>
<name>GSH1_JANMA</name>
<keyword id="KW-0067">ATP-binding</keyword>
<keyword id="KW-0317">Glutathione biosynthesis</keyword>
<keyword id="KW-0436">Ligase</keyword>
<keyword id="KW-0547">Nucleotide-binding</keyword>
<dbReference type="EC" id="6.3.2.2" evidence="1"/>
<dbReference type="EMBL" id="CP000269">
    <property type="protein sequence ID" value="ABR88957.1"/>
    <property type="molecule type" value="Genomic_DNA"/>
</dbReference>
<dbReference type="RefSeq" id="WP_012079023.1">
    <property type="nucleotide sequence ID" value="NC_009659.1"/>
</dbReference>
<dbReference type="SMR" id="A6SX59"/>
<dbReference type="STRING" id="375286.mma_1166"/>
<dbReference type="KEGG" id="mms:mma_1166"/>
<dbReference type="eggNOG" id="COG2918">
    <property type="taxonomic scope" value="Bacteria"/>
</dbReference>
<dbReference type="HOGENOM" id="CLU_020728_3_0_4"/>
<dbReference type="OrthoDB" id="9803907at2"/>
<dbReference type="UniPathway" id="UPA00142">
    <property type="reaction ID" value="UER00209"/>
</dbReference>
<dbReference type="Proteomes" id="UP000006388">
    <property type="component" value="Chromosome"/>
</dbReference>
<dbReference type="GO" id="GO:0005829">
    <property type="term" value="C:cytosol"/>
    <property type="evidence" value="ECO:0007669"/>
    <property type="project" value="TreeGrafter"/>
</dbReference>
<dbReference type="GO" id="GO:0005524">
    <property type="term" value="F:ATP binding"/>
    <property type="evidence" value="ECO:0007669"/>
    <property type="project" value="UniProtKB-KW"/>
</dbReference>
<dbReference type="GO" id="GO:0004357">
    <property type="term" value="F:glutamate-cysteine ligase activity"/>
    <property type="evidence" value="ECO:0007669"/>
    <property type="project" value="UniProtKB-UniRule"/>
</dbReference>
<dbReference type="GO" id="GO:0046872">
    <property type="term" value="F:metal ion binding"/>
    <property type="evidence" value="ECO:0007669"/>
    <property type="project" value="TreeGrafter"/>
</dbReference>
<dbReference type="GO" id="GO:0006750">
    <property type="term" value="P:glutathione biosynthetic process"/>
    <property type="evidence" value="ECO:0007669"/>
    <property type="project" value="UniProtKB-UniRule"/>
</dbReference>
<dbReference type="Gene3D" id="3.30.590.20">
    <property type="match status" value="1"/>
</dbReference>
<dbReference type="HAMAP" id="MF_00578">
    <property type="entry name" value="Glu_cys_ligase"/>
    <property type="match status" value="1"/>
</dbReference>
<dbReference type="InterPro" id="IPR014746">
    <property type="entry name" value="Gln_synth/guanido_kin_cat_dom"/>
</dbReference>
<dbReference type="InterPro" id="IPR007370">
    <property type="entry name" value="Glu_cys_ligase"/>
</dbReference>
<dbReference type="InterPro" id="IPR006334">
    <property type="entry name" value="Glut_cys_ligase"/>
</dbReference>
<dbReference type="NCBIfam" id="TIGR01434">
    <property type="entry name" value="glu_cys_ligase"/>
    <property type="match status" value="1"/>
</dbReference>
<dbReference type="PANTHER" id="PTHR38761">
    <property type="entry name" value="GLUTAMATE--CYSTEINE LIGASE"/>
    <property type="match status" value="1"/>
</dbReference>
<dbReference type="PANTHER" id="PTHR38761:SF1">
    <property type="entry name" value="GLUTAMATE--CYSTEINE LIGASE"/>
    <property type="match status" value="1"/>
</dbReference>
<dbReference type="Pfam" id="PF04262">
    <property type="entry name" value="Glu_cys_ligase"/>
    <property type="match status" value="1"/>
</dbReference>
<dbReference type="SUPFAM" id="SSF55931">
    <property type="entry name" value="Glutamine synthetase/guanido kinase"/>
    <property type="match status" value="1"/>
</dbReference>
<feature type="chain" id="PRO_1000025174" description="Glutamate--cysteine ligase">
    <location>
        <begin position="1"/>
        <end position="528"/>
    </location>
</feature>